<accession>Q969V4</accession>
<accession>D3DTM7</accession>
<reference key="1">
    <citation type="journal article" date="2001" name="Int. J. Biochem. Cell Biol.">
        <title>Cloning and characterization of a novel human TEKTIN1 gene.</title>
        <authorList>
            <person name="Xu M."/>
            <person name="Zhou Z."/>
            <person name="Cheng C."/>
            <person name="Zhao W."/>
            <person name="Tang R."/>
            <person name="Huang Y."/>
            <person name="Wang W."/>
            <person name="Xu J."/>
            <person name="Zeng L."/>
            <person name="Xie Y."/>
            <person name="Mao Y."/>
        </authorList>
    </citation>
    <scope>NUCLEOTIDE SEQUENCE [MRNA]</scope>
    <scope>TISSUE SPECIFICITY</scope>
    <source>
        <tissue>Fetal brain</tissue>
    </source>
</reference>
<reference key="2">
    <citation type="submission" date="2005-09" db="EMBL/GenBank/DDBJ databases">
        <authorList>
            <person name="Mural R.J."/>
            <person name="Istrail S."/>
            <person name="Sutton G.G."/>
            <person name="Florea L."/>
            <person name="Halpern A.L."/>
            <person name="Mobarry C.M."/>
            <person name="Lippert R."/>
            <person name="Walenz B."/>
            <person name="Shatkay H."/>
            <person name="Dew I."/>
            <person name="Miller J.R."/>
            <person name="Flanigan M.J."/>
            <person name="Edwards N.J."/>
            <person name="Bolanos R."/>
            <person name="Fasulo D."/>
            <person name="Halldorsson B.V."/>
            <person name="Hannenhalli S."/>
            <person name="Turner R."/>
            <person name="Yooseph S."/>
            <person name="Lu F."/>
            <person name="Nusskern D.R."/>
            <person name="Shue B.C."/>
            <person name="Zheng X.H."/>
            <person name="Zhong F."/>
            <person name="Delcher A.L."/>
            <person name="Huson D.H."/>
            <person name="Kravitz S.A."/>
            <person name="Mouchard L."/>
            <person name="Reinert K."/>
            <person name="Remington K.A."/>
            <person name="Clark A.G."/>
            <person name="Waterman M.S."/>
            <person name="Eichler E.E."/>
            <person name="Adams M.D."/>
            <person name="Hunkapiller M.W."/>
            <person name="Myers E.W."/>
            <person name="Venter J.C."/>
        </authorList>
    </citation>
    <scope>NUCLEOTIDE SEQUENCE [LARGE SCALE GENOMIC DNA]</scope>
</reference>
<reference key="3">
    <citation type="journal article" date="2004" name="Genome Res.">
        <title>The status, quality, and expansion of the NIH full-length cDNA project: the Mammalian Gene Collection (MGC).</title>
        <authorList>
            <consortium name="The MGC Project Team"/>
        </authorList>
    </citation>
    <scope>NUCLEOTIDE SEQUENCE [LARGE SCALE MRNA]</scope>
    <source>
        <tissue>Testis</tissue>
    </source>
</reference>
<reference evidence="7" key="4">
    <citation type="journal article" date="2022" name="Proc. Natl. Acad. Sci. U.S.A.">
        <title>SPACA9 is a lumenal protein of human ciliary singlet and doublet microtubules.</title>
        <authorList>
            <person name="Gui M."/>
            <person name="Croft J.T."/>
            <person name="Zabeo D."/>
            <person name="Acharya V."/>
            <person name="Kollman J.M."/>
            <person name="Burgoyne T."/>
            <person name="Hoog J.L."/>
            <person name="Brown A."/>
        </authorList>
    </citation>
    <scope>STRUCTURE BY ELECTRON MICROSCOPY (3.60 ANGSTROMS)</scope>
    <scope>FUNCTION</scope>
    <scope>SUBCELLULAR LOCATION</scope>
    <scope>TISSUE SPECIFICITY</scope>
</reference>
<name>TEKT1_HUMAN</name>
<comment type="function">
    <text evidence="5">Microtubule inner protein (MIP) part of the dynein-decorated doublet microtubules (DMTs) in cilia and flagellar axoneme. Forms filamentous polymers in the walls of ciliary and flagellar microtubules.</text>
</comment>
<comment type="subunit">
    <text evidence="2">Microtubule inner protein component of sperm flagellar doublet microtubules.</text>
</comment>
<comment type="interaction">
    <interactant intactId="EBI-10180409">
        <id>Q969V4</id>
    </interactant>
    <interactant intactId="EBI-358049">
        <id>Q13895</id>
        <label>BYSL</label>
    </interactant>
    <organismsDiffer>false</organismsDiffer>
    <experiments>6</experiments>
</comment>
<comment type="interaction">
    <interactant intactId="EBI-10180409">
        <id>Q969V4</id>
    </interactant>
    <interactant intactId="EBI-12049899">
        <id>Q96LT6</id>
        <label>C1orf74</label>
    </interactant>
    <organismsDiffer>false</organismsDiffer>
    <experiments>3</experiments>
</comment>
<comment type="interaction">
    <interactant intactId="EBI-10180409">
        <id>Q969V4</id>
    </interactant>
    <interactant intactId="EBI-10175300">
        <id>Q8TD31-3</id>
        <label>CCHCR1</label>
    </interactant>
    <organismsDiffer>false</organismsDiffer>
    <experiments>6</experiments>
</comment>
<comment type="interaction">
    <interactant intactId="EBI-10180409">
        <id>Q969V4</id>
    </interactant>
    <interactant intactId="EBI-749051">
        <id>Q8IYR0</id>
        <label>CFAP206</label>
    </interactant>
    <organismsDiffer>false</organismsDiffer>
    <experiments>3</experiments>
</comment>
<comment type="interaction">
    <interactant intactId="EBI-10180409">
        <id>Q969V4</id>
    </interactant>
    <interactant intactId="EBI-1210503">
        <id>O14647</id>
        <label>CHD2</label>
    </interactant>
    <organismsDiffer>false</organismsDiffer>
    <experiments>3</experiments>
</comment>
<comment type="interaction">
    <interactant intactId="EBI-10180409">
        <id>Q969V4</id>
    </interactant>
    <interactant intactId="EBI-743105">
        <id>Q5JVL4</id>
        <label>EFHC1</label>
    </interactant>
    <organismsDiffer>false</organismsDiffer>
    <experiments>3</experiments>
</comment>
<comment type="interaction">
    <interactant intactId="EBI-10180409">
        <id>Q969V4</id>
    </interactant>
    <interactant intactId="EBI-740220">
        <id>O14964</id>
        <label>HGS</label>
    </interactant>
    <organismsDiffer>false</organismsDiffer>
    <experiments>6</experiments>
</comment>
<comment type="interaction">
    <interactant intactId="EBI-10180409">
        <id>Q969V4</id>
    </interactant>
    <interactant intactId="EBI-352823">
        <id>P55795</id>
        <label>HNRNPH2</label>
    </interactant>
    <organismsDiffer>false</organismsDiffer>
    <experiments>8</experiments>
</comment>
<comment type="interaction">
    <interactant intactId="EBI-10180409">
        <id>Q969V4</id>
    </interactant>
    <interactant intactId="EBI-6426443">
        <id>Q2WGJ6</id>
        <label>KLHL38</label>
    </interactant>
    <organismsDiffer>false</organismsDiffer>
    <experiments>3</experiments>
</comment>
<comment type="interaction">
    <interactant intactId="EBI-10180409">
        <id>Q969V4</id>
    </interactant>
    <interactant intactId="EBI-2949715">
        <id>O95678</id>
        <label>KRT75</label>
    </interactant>
    <organismsDiffer>false</organismsDiffer>
    <experiments>3</experiments>
</comment>
<comment type="interaction">
    <interactant intactId="EBI-10180409">
        <id>Q969V4</id>
    </interactant>
    <interactant intactId="EBI-739909">
        <id>Q969R5</id>
        <label>L3MBTL2</label>
    </interactant>
    <organismsDiffer>false</organismsDiffer>
    <experiments>3</experiments>
</comment>
<comment type="interaction">
    <interactant intactId="EBI-10180409">
        <id>Q969V4</id>
    </interactant>
    <interactant intactId="EBI-10274069">
        <id>Q8TCE9</id>
        <label>LGALS14</label>
    </interactant>
    <organismsDiffer>false</organismsDiffer>
    <experiments>3</experiments>
</comment>
<comment type="interaction">
    <interactant intactId="EBI-10180409">
        <id>Q969V4</id>
    </interactant>
    <interactant intactId="EBI-10172526">
        <id>Q9UJV3-2</id>
        <label>MID2</label>
    </interactant>
    <organismsDiffer>false</organismsDiffer>
    <experiments>3</experiments>
</comment>
<comment type="interaction">
    <interactant intactId="EBI-10180409">
        <id>Q969V4</id>
    </interactant>
    <interactant intactId="EBI-10285636">
        <id>Q96FA6</id>
        <label>NCAPD3</label>
    </interactant>
    <organismsDiffer>false</organismsDiffer>
    <experiments>3</experiments>
</comment>
<comment type="interaction">
    <interactant intactId="EBI-10180409">
        <id>Q969V4</id>
    </interactant>
    <interactant intactId="EBI-744782">
        <id>Q9Y5B8</id>
        <label>NME7</label>
    </interactant>
    <organismsDiffer>false</organismsDiffer>
    <experiments>5</experiments>
</comment>
<comment type="interaction">
    <interactant intactId="EBI-10180409">
        <id>Q969V4</id>
    </interactant>
    <interactant intactId="EBI-741158">
        <id>Q96HA8</id>
        <label>NTAQ1</label>
    </interactant>
    <organismsDiffer>false</organismsDiffer>
    <experiments>3</experiments>
</comment>
<comment type="interaction">
    <interactant intactId="EBI-10180409">
        <id>Q969V4</id>
    </interactant>
    <interactant intactId="EBI-741048">
        <id>Q7Z3B4</id>
        <label>NUP54</label>
    </interactant>
    <organismsDiffer>false</organismsDiffer>
    <experiments>3</experiments>
</comment>
<comment type="interaction">
    <interactant intactId="EBI-10180409">
        <id>Q969V4</id>
    </interactant>
    <interactant intactId="EBI-1181439">
        <id>P54619</id>
        <label>PRKAG1</label>
    </interactant>
    <organismsDiffer>false</organismsDiffer>
    <experiments>6</experiments>
</comment>
<comment type="interaction">
    <interactant intactId="EBI-10180409">
        <id>Q969V4</id>
    </interactant>
    <interactant intactId="EBI-11984663">
        <id>Q06455-2</id>
        <label>RUNX1T1</label>
    </interactant>
    <organismsDiffer>false</organismsDiffer>
    <experiments>3</experiments>
</comment>
<comment type="interaction">
    <interactant intactId="EBI-10180409">
        <id>Q969V4</id>
    </interactant>
    <interactant intactId="EBI-727004">
        <id>O00560</id>
        <label>SDCBP</label>
    </interactant>
    <organismsDiffer>false</organismsDiffer>
    <experiments>3</experiments>
</comment>
<comment type="interaction">
    <interactant intactId="EBI-10180409">
        <id>Q969V4</id>
    </interactant>
    <interactant intactId="EBI-750487">
        <id>Q8WW24</id>
        <label>TEKT4</label>
    </interactant>
    <organismsDiffer>false</organismsDiffer>
    <experiments>3</experiments>
</comment>
<comment type="interaction">
    <interactant intactId="EBI-10180409">
        <id>Q969V4</id>
    </interactant>
    <interactant intactId="EBI-10241197">
        <id>Q3SY00</id>
        <label>TSGA10IP</label>
    </interactant>
    <organismsDiffer>false</organismsDiffer>
    <experiments>3</experiments>
</comment>
<comment type="interaction">
    <interactant intactId="EBI-10180409">
        <id>Q969V4</id>
    </interactant>
    <interactant intactId="EBI-7353612">
        <id>P57075-2</id>
        <label>UBASH3A</label>
    </interactant>
    <organismsDiffer>false</organismsDiffer>
    <experiments>3</experiments>
</comment>
<comment type="interaction">
    <interactant intactId="EBI-10180409">
        <id>Q969V4</id>
    </interactant>
    <interactant intactId="EBI-1048763">
        <id>Q9H3U1</id>
        <label>UNC45A</label>
    </interactant>
    <organismsDiffer>false</organismsDiffer>
    <experiments>3</experiments>
</comment>
<comment type="interaction">
    <interactant intactId="EBI-10180409">
        <id>Q969V4</id>
    </interactant>
    <interactant intactId="EBI-739895">
        <id>Q8N6Y0</id>
        <label>USHBP1</label>
    </interactant>
    <organismsDiffer>false</organismsDiffer>
    <experiments>3</experiments>
</comment>
<comment type="interaction">
    <interactant intactId="EBI-10180409">
        <id>Q969V4</id>
    </interactant>
    <interactant intactId="EBI-716775">
        <id>P18206</id>
        <label>VCL</label>
    </interactant>
    <organismsDiffer>false</organismsDiffer>
    <experiments>3</experiments>
</comment>
<comment type="subcellular location">
    <subcellularLocation>
        <location evidence="5">Cytoplasm</location>
        <location evidence="5">Cytoskeleton</location>
        <location evidence="5">Cilium axoneme</location>
    </subcellularLocation>
    <subcellularLocation>
        <location evidence="1">Cytoplasm</location>
        <location evidence="1">Cytoskeleton</location>
        <location evidence="1">Flagellum axoneme</location>
    </subcellularLocation>
</comment>
<comment type="tissue specificity">
    <text evidence="4 5">Predominantly expressed in testis. Expressed in airway epithelial cells (PubMed:36191189).</text>
</comment>
<comment type="PTM">
    <text evidence="2">Ubiquitinated, leading to its degradation. Deubiquitinated by USP16, promoting its stability.</text>
</comment>
<comment type="similarity">
    <text evidence="6">Belongs to the tektin family.</text>
</comment>
<evidence type="ECO:0000250" key="1">
    <source>
        <dbReference type="UniProtKB" id="Q32KZ9"/>
    </source>
</evidence>
<evidence type="ECO:0000250" key="2">
    <source>
        <dbReference type="UniProtKB" id="Q9DAJ2"/>
    </source>
</evidence>
<evidence type="ECO:0000255" key="3"/>
<evidence type="ECO:0000269" key="4">
    <source>
    </source>
</evidence>
<evidence type="ECO:0000269" key="5">
    <source>
    </source>
</evidence>
<evidence type="ECO:0000305" key="6"/>
<evidence type="ECO:0007744" key="7">
    <source>
        <dbReference type="PDB" id="7UNG"/>
    </source>
</evidence>
<protein>
    <recommendedName>
        <fullName>Tektin-1</fullName>
    </recommendedName>
</protein>
<keyword id="KW-0002">3D-structure</keyword>
<keyword id="KW-0966">Cell projection</keyword>
<keyword id="KW-0969">Cilium</keyword>
<keyword id="KW-0175">Coiled coil</keyword>
<keyword id="KW-0963">Cytoplasm</keyword>
<keyword id="KW-0206">Cytoskeleton</keyword>
<keyword id="KW-0282">Flagellum</keyword>
<keyword id="KW-0493">Microtubule</keyword>
<keyword id="KW-1267">Proteomics identification</keyword>
<keyword id="KW-1185">Reference proteome</keyword>
<keyword id="KW-0832">Ubl conjugation</keyword>
<feature type="chain" id="PRO_0000184562" description="Tektin-1">
    <location>
        <begin position="1"/>
        <end position="418"/>
    </location>
</feature>
<feature type="coiled-coil region" evidence="3">
    <location>
        <begin position="21"/>
        <end position="107"/>
    </location>
</feature>
<feature type="coiled-coil region" evidence="3">
    <location>
        <begin position="134"/>
        <end position="177"/>
    </location>
</feature>
<feature type="coiled-coil region" evidence="3">
    <location>
        <begin position="266"/>
        <end position="308"/>
    </location>
</feature>
<feature type="coiled-coil region" evidence="3">
    <location>
        <begin position="333"/>
        <end position="384"/>
    </location>
</feature>
<feature type="sequence variant" id="VAR_034548" description="In dbSNP:rs34431552.">
    <original>I</original>
    <variation>V</variation>
    <location>
        <position position="146"/>
    </location>
</feature>
<feature type="sequence variant" id="VAR_022150" description="In dbSNP:rs3744395.">
    <original>R</original>
    <variation>C</variation>
    <location>
        <position position="254"/>
    </location>
</feature>
<feature type="sequence variant" id="VAR_022151" description="In dbSNP:rs2271233.">
    <original>V</original>
    <variation>I</variation>
    <location>
        <position position="332"/>
    </location>
</feature>
<sequence length="418" mass="48283">MAKLLQPPPKFLPSEWHIANKNQYHRADAQRSRSERLVAESQRLVDEIEKTTRKSQSDVNKKLEQRLEEVQFWKKELDDKLEQLVNVTDDLLIYKIRLEKALETLKEPLHITETCLAYREKRIGIDLVHDTVEHELIKEAEIIQGIMALLTRTLEEASEQIRMNRSAKYNLEKDLKDKFVALTIDDICFSLNNNSPNIRYSENAVRIEPNSVSLEDWLDFSSTNVEKADKQRNNSLMLKALVDRILSQTANDLRKQCDVVDTAFKNGLKDTKDARDKLADHLAKVMEEIASQEKNITALEKAILDQEGPAKVAHTRLETRTHRPNVELCRDVAQYRLMKEVQEITHNVARLKETLAQAQAELKGLHRRQLALQEEIQVKENTIYIDEVLCMQMRKSIPLRDGEDHGVWAGGLRPDAVC</sequence>
<proteinExistence type="evidence at protein level"/>
<dbReference type="EMBL" id="AF357879">
    <property type="protein sequence ID" value="AAL27695.1"/>
    <property type="molecule type" value="mRNA"/>
</dbReference>
<dbReference type="EMBL" id="CH471108">
    <property type="protein sequence ID" value="EAW90284.1"/>
    <property type="molecule type" value="Genomic_DNA"/>
</dbReference>
<dbReference type="EMBL" id="CH471108">
    <property type="protein sequence ID" value="EAW90285.1"/>
    <property type="molecule type" value="Genomic_DNA"/>
</dbReference>
<dbReference type="EMBL" id="BC014599">
    <property type="protein sequence ID" value="AAH14599.1"/>
    <property type="molecule type" value="mRNA"/>
</dbReference>
<dbReference type="CCDS" id="CCDS11083.1"/>
<dbReference type="RefSeq" id="NP_444515.1">
    <property type="nucleotide sequence ID" value="NM_053285.2"/>
</dbReference>
<dbReference type="PDB" id="7UNG">
    <property type="method" value="EM"/>
    <property type="resolution" value="3.60 A"/>
    <property type="chains" value="A0/A1/A2/A3/A4=1-418"/>
</dbReference>
<dbReference type="PDB" id="8J07">
    <property type="method" value="EM"/>
    <property type="resolution" value="4.10 A"/>
    <property type="chains" value="8A/8B/8C/8D/8E/8F/8G/8H=1-418"/>
</dbReference>
<dbReference type="PDBsum" id="7UNG"/>
<dbReference type="PDBsum" id="8J07"/>
<dbReference type="EMDB" id="EMD-26624"/>
<dbReference type="EMDB" id="EMD-35888"/>
<dbReference type="SMR" id="Q969V4"/>
<dbReference type="BioGRID" id="123716">
    <property type="interactions" value="30"/>
</dbReference>
<dbReference type="FunCoup" id="Q969V4">
    <property type="interactions" value="90"/>
</dbReference>
<dbReference type="IntAct" id="Q969V4">
    <property type="interactions" value="27"/>
</dbReference>
<dbReference type="STRING" id="9606.ENSP00000341346"/>
<dbReference type="GlyGen" id="Q969V4">
    <property type="glycosylation" value="1 site, 1 O-linked glycan (1 site)"/>
</dbReference>
<dbReference type="iPTMnet" id="Q969V4"/>
<dbReference type="PhosphoSitePlus" id="Q969V4"/>
<dbReference type="SwissPalm" id="Q969V4"/>
<dbReference type="BioMuta" id="TEKT1"/>
<dbReference type="DMDM" id="25009461"/>
<dbReference type="MassIVE" id="Q969V4"/>
<dbReference type="PaxDb" id="9606-ENSP00000341346"/>
<dbReference type="PeptideAtlas" id="Q969V4"/>
<dbReference type="ProteomicsDB" id="75852"/>
<dbReference type="Antibodypedia" id="23852">
    <property type="antibodies" value="142 antibodies from 25 providers"/>
</dbReference>
<dbReference type="DNASU" id="83659"/>
<dbReference type="Ensembl" id="ENST00000338694.7">
    <property type="protein sequence ID" value="ENSP00000341346.2"/>
    <property type="gene ID" value="ENSG00000167858.13"/>
</dbReference>
<dbReference type="GeneID" id="83659"/>
<dbReference type="KEGG" id="hsa:83659"/>
<dbReference type="MANE-Select" id="ENST00000338694.7">
    <property type="protein sequence ID" value="ENSP00000341346.2"/>
    <property type="RefSeq nucleotide sequence ID" value="NM_053285.2"/>
    <property type="RefSeq protein sequence ID" value="NP_444515.1"/>
</dbReference>
<dbReference type="UCSC" id="uc002gdt.4">
    <property type="organism name" value="human"/>
</dbReference>
<dbReference type="AGR" id="HGNC:15534"/>
<dbReference type="CTD" id="83659"/>
<dbReference type="DisGeNET" id="83659"/>
<dbReference type="GeneCards" id="TEKT1"/>
<dbReference type="HGNC" id="HGNC:15534">
    <property type="gene designation" value="TEKT1"/>
</dbReference>
<dbReference type="HPA" id="ENSG00000167858">
    <property type="expression patterns" value="Group enriched (choroid plexus, fallopian tube)"/>
</dbReference>
<dbReference type="MIM" id="609002">
    <property type="type" value="gene"/>
</dbReference>
<dbReference type="neXtProt" id="NX_Q969V4"/>
<dbReference type="OpenTargets" id="ENSG00000167858"/>
<dbReference type="PharmGKB" id="PA37976"/>
<dbReference type="VEuPathDB" id="HostDB:ENSG00000167858"/>
<dbReference type="eggNOG" id="KOG2685">
    <property type="taxonomic scope" value="Eukaryota"/>
</dbReference>
<dbReference type="GeneTree" id="ENSGT00950000182894"/>
<dbReference type="HOGENOM" id="CLU_033588_2_2_1"/>
<dbReference type="InParanoid" id="Q969V4"/>
<dbReference type="OMA" id="LAMVMDE"/>
<dbReference type="OrthoDB" id="10054259at2759"/>
<dbReference type="PAN-GO" id="Q969V4">
    <property type="GO annotations" value="3 GO annotations based on evolutionary models"/>
</dbReference>
<dbReference type="PhylomeDB" id="Q969V4"/>
<dbReference type="TreeFam" id="TF320754"/>
<dbReference type="PathwayCommons" id="Q969V4"/>
<dbReference type="SignaLink" id="Q969V4"/>
<dbReference type="SIGNOR" id="Q969V4"/>
<dbReference type="BioGRID-ORCS" id="83659">
    <property type="hits" value="5 hits in 1144 CRISPR screens"/>
</dbReference>
<dbReference type="ChiTaRS" id="TEKT1">
    <property type="organism name" value="human"/>
</dbReference>
<dbReference type="GeneWiki" id="TEKT1"/>
<dbReference type="GenomeRNAi" id="83659"/>
<dbReference type="Pharos" id="Q969V4">
    <property type="development level" value="Tbio"/>
</dbReference>
<dbReference type="PRO" id="PR:Q969V4"/>
<dbReference type="Proteomes" id="UP000005640">
    <property type="component" value="Chromosome 17"/>
</dbReference>
<dbReference type="RNAct" id="Q969V4">
    <property type="molecule type" value="protein"/>
</dbReference>
<dbReference type="Bgee" id="ENSG00000167858">
    <property type="expression patterns" value="Expressed in bronchial epithelial cell and 118 other cell types or tissues"/>
</dbReference>
<dbReference type="ExpressionAtlas" id="Q969V4">
    <property type="expression patterns" value="baseline and differential"/>
</dbReference>
<dbReference type="GO" id="GO:0160111">
    <property type="term" value="C:axonemal A tubule inner sheath"/>
    <property type="evidence" value="ECO:0000250"/>
    <property type="project" value="UniProtKB"/>
</dbReference>
<dbReference type="GO" id="GO:0005879">
    <property type="term" value="C:axonemal microtubule"/>
    <property type="evidence" value="ECO:0000314"/>
    <property type="project" value="UniProtKB"/>
</dbReference>
<dbReference type="GO" id="GO:0015630">
    <property type="term" value="C:microtubule cytoskeleton"/>
    <property type="evidence" value="ECO:0000318"/>
    <property type="project" value="GO_Central"/>
</dbReference>
<dbReference type="GO" id="GO:0005634">
    <property type="term" value="C:nucleus"/>
    <property type="evidence" value="ECO:0007005"/>
    <property type="project" value="UniProtKB"/>
</dbReference>
<dbReference type="GO" id="GO:0036126">
    <property type="term" value="C:sperm flagellum"/>
    <property type="evidence" value="ECO:0000250"/>
    <property type="project" value="UniProtKB"/>
</dbReference>
<dbReference type="GO" id="GO:0060271">
    <property type="term" value="P:cilium assembly"/>
    <property type="evidence" value="ECO:0000318"/>
    <property type="project" value="GO_Central"/>
</dbReference>
<dbReference type="GO" id="GO:0060294">
    <property type="term" value="P:cilium movement involved in cell motility"/>
    <property type="evidence" value="ECO:0000318"/>
    <property type="project" value="GO_Central"/>
</dbReference>
<dbReference type="GO" id="GO:0030317">
    <property type="term" value="P:flagellated sperm motility"/>
    <property type="evidence" value="ECO:0000250"/>
    <property type="project" value="UniProtKB"/>
</dbReference>
<dbReference type="InterPro" id="IPR048256">
    <property type="entry name" value="Tektin-like"/>
</dbReference>
<dbReference type="InterPro" id="IPR000435">
    <property type="entry name" value="Tektins"/>
</dbReference>
<dbReference type="PANTHER" id="PTHR19960">
    <property type="entry name" value="TEKTIN"/>
    <property type="match status" value="1"/>
</dbReference>
<dbReference type="PANTHER" id="PTHR19960:SF25">
    <property type="entry name" value="TEKTIN-1"/>
    <property type="match status" value="1"/>
</dbReference>
<dbReference type="Pfam" id="PF03148">
    <property type="entry name" value="Tektin"/>
    <property type="match status" value="1"/>
</dbReference>
<dbReference type="PRINTS" id="PR00511">
    <property type="entry name" value="TEKTIN"/>
</dbReference>
<gene>
    <name type="primary">TEKT1</name>
</gene>
<organism>
    <name type="scientific">Homo sapiens</name>
    <name type="common">Human</name>
    <dbReference type="NCBI Taxonomy" id="9606"/>
    <lineage>
        <taxon>Eukaryota</taxon>
        <taxon>Metazoa</taxon>
        <taxon>Chordata</taxon>
        <taxon>Craniata</taxon>
        <taxon>Vertebrata</taxon>
        <taxon>Euteleostomi</taxon>
        <taxon>Mammalia</taxon>
        <taxon>Eutheria</taxon>
        <taxon>Euarchontoglires</taxon>
        <taxon>Primates</taxon>
        <taxon>Haplorrhini</taxon>
        <taxon>Catarrhini</taxon>
        <taxon>Hominidae</taxon>
        <taxon>Homo</taxon>
    </lineage>
</organism>